<comment type="function">
    <text>May play a role in plant defense. Probably has no oxalate oxidase activity even if the active site is conserved.</text>
</comment>
<comment type="subunit">
    <text evidence="1">Oligomer (believed to be a pentamer but probably hexamer).</text>
</comment>
<comment type="subcellular location">
    <subcellularLocation>
        <location evidence="1">Secreted</location>
        <location evidence="1">Extracellular space</location>
        <location evidence="1">Apoplast</location>
    </subcellularLocation>
</comment>
<comment type="similarity">
    <text evidence="3">Belongs to the germin family.</text>
</comment>
<reference key="1">
    <citation type="journal article" date="2005" name="BMC Biol.">
        <title>The sequence of rice chromosomes 11 and 12, rich in disease resistance genes and recent gene duplications.</title>
        <authorList>
            <consortium name="The rice chromosomes 11 and 12 sequencing consortia"/>
        </authorList>
    </citation>
    <scope>NUCLEOTIDE SEQUENCE [LARGE SCALE GENOMIC DNA]</scope>
    <source>
        <strain>cv. Nipponbare</strain>
    </source>
</reference>
<reference key="2">
    <citation type="journal article" date="2005" name="Nature">
        <title>The map-based sequence of the rice genome.</title>
        <authorList>
            <consortium name="International rice genome sequencing project (IRGSP)"/>
        </authorList>
    </citation>
    <scope>NUCLEOTIDE SEQUENCE [LARGE SCALE GENOMIC DNA]</scope>
    <source>
        <strain>cv. Nipponbare</strain>
    </source>
</reference>
<reference key="3">
    <citation type="journal article" date="2008" name="Nucleic Acids Res.">
        <title>The rice annotation project database (RAP-DB): 2008 update.</title>
        <authorList>
            <consortium name="The rice annotation project (RAP)"/>
        </authorList>
    </citation>
    <scope>GENOME REANNOTATION</scope>
    <source>
        <strain>cv. Nipponbare</strain>
    </source>
</reference>
<reference key="4">
    <citation type="journal article" date="2013" name="Rice">
        <title>Improvement of the Oryza sativa Nipponbare reference genome using next generation sequence and optical map data.</title>
        <authorList>
            <person name="Kawahara Y."/>
            <person name="de la Bastide M."/>
            <person name="Hamilton J.P."/>
            <person name="Kanamori H."/>
            <person name="McCombie W.R."/>
            <person name="Ouyang S."/>
            <person name="Schwartz D.C."/>
            <person name="Tanaka T."/>
            <person name="Wu J."/>
            <person name="Zhou S."/>
            <person name="Childs K.L."/>
            <person name="Davidson R.M."/>
            <person name="Lin H."/>
            <person name="Quesada-Ocampo L."/>
            <person name="Vaillancourt B."/>
            <person name="Sakai H."/>
            <person name="Lee S.S."/>
            <person name="Kim J."/>
            <person name="Numa H."/>
            <person name="Itoh T."/>
            <person name="Buell C.R."/>
            <person name="Matsumoto T."/>
        </authorList>
    </citation>
    <scope>GENOME REANNOTATION</scope>
    <source>
        <strain>cv. Nipponbare</strain>
    </source>
</reference>
<reference key="5">
    <citation type="journal article" date="2005" name="PLoS Biol.">
        <title>The genomes of Oryza sativa: a history of duplications.</title>
        <authorList>
            <person name="Yu J."/>
            <person name="Wang J."/>
            <person name="Lin W."/>
            <person name="Li S."/>
            <person name="Li H."/>
            <person name="Zhou J."/>
            <person name="Ni P."/>
            <person name="Dong W."/>
            <person name="Hu S."/>
            <person name="Zeng C."/>
            <person name="Zhang J."/>
            <person name="Zhang Y."/>
            <person name="Li R."/>
            <person name="Xu Z."/>
            <person name="Li S."/>
            <person name="Li X."/>
            <person name="Zheng H."/>
            <person name="Cong L."/>
            <person name="Lin L."/>
            <person name="Yin J."/>
            <person name="Geng J."/>
            <person name="Li G."/>
            <person name="Shi J."/>
            <person name="Liu J."/>
            <person name="Lv H."/>
            <person name="Li J."/>
            <person name="Wang J."/>
            <person name="Deng Y."/>
            <person name="Ran L."/>
            <person name="Shi X."/>
            <person name="Wang X."/>
            <person name="Wu Q."/>
            <person name="Li C."/>
            <person name="Ren X."/>
            <person name="Wang J."/>
            <person name="Wang X."/>
            <person name="Li D."/>
            <person name="Liu D."/>
            <person name="Zhang X."/>
            <person name="Ji Z."/>
            <person name="Zhao W."/>
            <person name="Sun Y."/>
            <person name="Zhang Z."/>
            <person name="Bao J."/>
            <person name="Han Y."/>
            <person name="Dong L."/>
            <person name="Ji J."/>
            <person name="Chen P."/>
            <person name="Wu S."/>
            <person name="Liu J."/>
            <person name="Xiao Y."/>
            <person name="Bu D."/>
            <person name="Tan J."/>
            <person name="Yang L."/>
            <person name="Ye C."/>
            <person name="Zhang J."/>
            <person name="Xu J."/>
            <person name="Zhou Y."/>
            <person name="Yu Y."/>
            <person name="Zhang B."/>
            <person name="Zhuang S."/>
            <person name="Wei H."/>
            <person name="Liu B."/>
            <person name="Lei M."/>
            <person name="Yu H."/>
            <person name="Li Y."/>
            <person name="Xu H."/>
            <person name="Wei S."/>
            <person name="He X."/>
            <person name="Fang L."/>
            <person name="Zhang Z."/>
            <person name="Zhang Y."/>
            <person name="Huang X."/>
            <person name="Su Z."/>
            <person name="Tong W."/>
            <person name="Li J."/>
            <person name="Tong Z."/>
            <person name="Li S."/>
            <person name="Ye J."/>
            <person name="Wang L."/>
            <person name="Fang L."/>
            <person name="Lei T."/>
            <person name="Chen C.-S."/>
            <person name="Chen H.-C."/>
            <person name="Xu Z."/>
            <person name="Li H."/>
            <person name="Huang H."/>
            <person name="Zhang F."/>
            <person name="Xu H."/>
            <person name="Li N."/>
            <person name="Zhao C."/>
            <person name="Li S."/>
            <person name="Dong L."/>
            <person name="Huang Y."/>
            <person name="Li L."/>
            <person name="Xi Y."/>
            <person name="Qi Q."/>
            <person name="Li W."/>
            <person name="Zhang B."/>
            <person name="Hu W."/>
            <person name="Zhang Y."/>
            <person name="Tian X."/>
            <person name="Jiao Y."/>
            <person name="Liang X."/>
            <person name="Jin J."/>
            <person name="Gao L."/>
            <person name="Zheng W."/>
            <person name="Hao B."/>
            <person name="Liu S.-M."/>
            <person name="Wang W."/>
            <person name="Yuan L."/>
            <person name="Cao M."/>
            <person name="McDermott J."/>
            <person name="Samudrala R."/>
            <person name="Wang J."/>
            <person name="Wong G.K.-S."/>
            <person name="Yang H."/>
        </authorList>
    </citation>
    <scope>NUCLEOTIDE SEQUENCE [LARGE SCALE GENOMIC DNA]</scope>
    <source>
        <strain>cv. Nipponbare</strain>
    </source>
</reference>
<reference key="6">
    <citation type="submission" date="2006-10" db="EMBL/GenBank/DDBJ databases">
        <title>Oryza sativa full length cDNA.</title>
        <authorList>
            <consortium name="The rice full-length cDNA consortium"/>
        </authorList>
    </citation>
    <scope>NUCLEOTIDE SEQUENCE [LARGE SCALE MRNA]</scope>
    <source>
        <strain>cv. Nipponbare</strain>
    </source>
</reference>
<sequence>MKLSTVLCCYLLLLGLFAPEIISDSPPLQDVCPMAPQGERKLFMNGFFCKSPSTIMASDFKTLLLNHAGDLDNMVRSSANIITATEFPGLNTLGISMARTDIAVSGAVLPHSHPRASEMMFVHSGSVVAGFFDTKGKLFQKTLAEGDVFIFPRGLVHFIMNYGFGLATTFSVLNSQNPGVVGITHAMFAPDSEVAEGLMARMLSFRDMGMDDSSSVDSPWFY</sequence>
<protein>
    <recommendedName>
        <fullName>Germin-like protein 11-1</fullName>
    </recommendedName>
</protein>
<evidence type="ECO:0000250" key="1"/>
<evidence type="ECO:0000255" key="2"/>
<evidence type="ECO:0000305" key="3"/>
<feature type="signal peptide" evidence="2">
    <location>
        <begin position="1"/>
        <end position="23"/>
    </location>
</feature>
<feature type="chain" id="PRO_0000365530" description="Germin-like protein 11-1">
    <location>
        <begin position="24"/>
        <end position="222"/>
    </location>
</feature>
<feature type="domain" description="Cupin type-1" evidence="2">
    <location>
        <begin position="72"/>
        <end position="195"/>
    </location>
</feature>
<feature type="binding site" evidence="1">
    <location>
        <position position="111"/>
    </location>
    <ligand>
        <name>Mn(2+)</name>
        <dbReference type="ChEBI" id="CHEBI:29035"/>
    </ligand>
</feature>
<feature type="binding site" evidence="1">
    <location>
        <position position="113"/>
    </location>
    <ligand>
        <name>Mn(2+)</name>
        <dbReference type="ChEBI" id="CHEBI:29035"/>
    </ligand>
</feature>
<feature type="binding site" evidence="1">
    <location>
        <position position="118"/>
    </location>
    <ligand>
        <name>Mn(2+)</name>
        <dbReference type="ChEBI" id="CHEBI:29035"/>
    </ligand>
</feature>
<feature type="binding site" evidence="1">
    <location>
        <position position="157"/>
    </location>
    <ligand>
        <name>Mn(2+)</name>
        <dbReference type="ChEBI" id="CHEBI:29035"/>
    </ligand>
</feature>
<feature type="disulfide bond" evidence="1">
    <location>
        <begin position="32"/>
        <end position="49"/>
    </location>
</feature>
<gene>
    <name type="ordered locus">Os11g0537350</name>
    <name type="ordered locus">LOC_Os11g33110</name>
    <name type="ORF">OsJ_032823</name>
</gene>
<name>GL111_ORYSJ</name>
<organism>
    <name type="scientific">Oryza sativa subsp. japonica</name>
    <name type="common">Rice</name>
    <dbReference type="NCBI Taxonomy" id="39947"/>
    <lineage>
        <taxon>Eukaryota</taxon>
        <taxon>Viridiplantae</taxon>
        <taxon>Streptophyta</taxon>
        <taxon>Embryophyta</taxon>
        <taxon>Tracheophyta</taxon>
        <taxon>Spermatophyta</taxon>
        <taxon>Magnoliopsida</taxon>
        <taxon>Liliopsida</taxon>
        <taxon>Poales</taxon>
        <taxon>Poaceae</taxon>
        <taxon>BOP clade</taxon>
        <taxon>Oryzoideae</taxon>
        <taxon>Oryzeae</taxon>
        <taxon>Oryzinae</taxon>
        <taxon>Oryza</taxon>
        <taxon>Oryza sativa</taxon>
    </lineage>
</organism>
<accession>Q2R352</accession>
<accession>A0A0P0Y343</accession>
<accession>B7FAH6</accession>
<accession>Q0ISC4</accession>
<dbReference type="EMBL" id="DP000010">
    <property type="protein sequence ID" value="ABA94088.1"/>
    <property type="molecule type" value="Genomic_DNA"/>
</dbReference>
<dbReference type="EMBL" id="AP008217">
    <property type="protein sequence ID" value="BAF28391.2"/>
    <property type="molecule type" value="Genomic_DNA"/>
</dbReference>
<dbReference type="EMBL" id="AP014967">
    <property type="protein sequence ID" value="BAT14311.1"/>
    <property type="molecule type" value="Genomic_DNA"/>
</dbReference>
<dbReference type="EMBL" id="CM000148">
    <property type="protein sequence ID" value="EAZ18614.1"/>
    <property type="molecule type" value="Genomic_DNA"/>
</dbReference>
<dbReference type="EMBL" id="AK243486">
    <property type="protein sequence ID" value="BAH01624.1"/>
    <property type="molecule type" value="mRNA"/>
</dbReference>
<dbReference type="RefSeq" id="XP_015618049.1">
    <property type="nucleotide sequence ID" value="XM_015762563.1"/>
</dbReference>
<dbReference type="SMR" id="Q2R352"/>
<dbReference type="FunCoup" id="Q2R352">
    <property type="interactions" value="1356"/>
</dbReference>
<dbReference type="PaxDb" id="39947-Q2R352"/>
<dbReference type="EnsemblPlants" id="Os11t0537350-00">
    <property type="protein sequence ID" value="Os11t0537350-00"/>
    <property type="gene ID" value="Os11g0537350"/>
</dbReference>
<dbReference type="GeneID" id="9269964"/>
<dbReference type="Gramene" id="Os11t0537350-00">
    <property type="protein sequence ID" value="Os11t0537350-00"/>
    <property type="gene ID" value="Os11g0537350"/>
</dbReference>
<dbReference type="KEGG" id="dosa:Os11g0537300"/>
<dbReference type="KEGG" id="osa:9269964"/>
<dbReference type="eggNOG" id="ENOG502RXK8">
    <property type="taxonomic scope" value="Eukaryota"/>
</dbReference>
<dbReference type="HOGENOM" id="CLU_015790_0_1_1"/>
<dbReference type="InParanoid" id="Q2R352"/>
<dbReference type="OMA" id="LLHYCLN"/>
<dbReference type="OrthoDB" id="1921208at2759"/>
<dbReference type="Proteomes" id="UP000000763">
    <property type="component" value="Chromosome 11"/>
</dbReference>
<dbReference type="Proteomes" id="UP000007752">
    <property type="component" value="Chromosome 11"/>
</dbReference>
<dbReference type="Proteomes" id="UP000059680">
    <property type="component" value="Chromosome 11"/>
</dbReference>
<dbReference type="GO" id="GO:0048046">
    <property type="term" value="C:apoplast"/>
    <property type="evidence" value="ECO:0007669"/>
    <property type="project" value="UniProtKB-SubCell"/>
</dbReference>
<dbReference type="GO" id="GO:0030145">
    <property type="term" value="F:manganese ion binding"/>
    <property type="evidence" value="ECO:0007669"/>
    <property type="project" value="InterPro"/>
</dbReference>
<dbReference type="CDD" id="cd02241">
    <property type="entry name" value="cupin_OxOx"/>
    <property type="match status" value="1"/>
</dbReference>
<dbReference type="FunFam" id="2.60.120.10:FF:000025">
    <property type="entry name" value="germin-like protein subfamily 2 member 1"/>
    <property type="match status" value="1"/>
</dbReference>
<dbReference type="Gene3D" id="2.60.120.10">
    <property type="entry name" value="Jelly Rolls"/>
    <property type="match status" value="1"/>
</dbReference>
<dbReference type="InterPro" id="IPR006045">
    <property type="entry name" value="Cupin_1"/>
</dbReference>
<dbReference type="InterPro" id="IPR001929">
    <property type="entry name" value="Germin"/>
</dbReference>
<dbReference type="InterPro" id="IPR019780">
    <property type="entry name" value="Germin_Mn-BS"/>
</dbReference>
<dbReference type="InterPro" id="IPR014710">
    <property type="entry name" value="RmlC-like_jellyroll"/>
</dbReference>
<dbReference type="InterPro" id="IPR011051">
    <property type="entry name" value="RmlC_Cupin_sf"/>
</dbReference>
<dbReference type="PANTHER" id="PTHR31238">
    <property type="entry name" value="GERMIN-LIKE PROTEIN SUBFAMILY 3 MEMBER 3"/>
    <property type="match status" value="1"/>
</dbReference>
<dbReference type="Pfam" id="PF00190">
    <property type="entry name" value="Cupin_1"/>
    <property type="match status" value="1"/>
</dbReference>
<dbReference type="PRINTS" id="PR00325">
    <property type="entry name" value="GERMIN"/>
</dbReference>
<dbReference type="SMART" id="SM00835">
    <property type="entry name" value="Cupin_1"/>
    <property type="match status" value="1"/>
</dbReference>
<dbReference type="SUPFAM" id="SSF51182">
    <property type="entry name" value="RmlC-like cupins"/>
    <property type="match status" value="1"/>
</dbReference>
<dbReference type="PROSITE" id="PS00725">
    <property type="entry name" value="GERMIN"/>
    <property type="match status" value="1"/>
</dbReference>
<keyword id="KW-0052">Apoplast</keyword>
<keyword id="KW-1015">Disulfide bond</keyword>
<keyword id="KW-0464">Manganese</keyword>
<keyword id="KW-0479">Metal-binding</keyword>
<keyword id="KW-1185">Reference proteome</keyword>
<keyword id="KW-0964">Secreted</keyword>
<keyword id="KW-0732">Signal</keyword>
<proteinExistence type="evidence at transcript level"/>